<dbReference type="EC" id="2.3.1.286" evidence="2"/>
<dbReference type="EMBL" id="AE005174">
    <property type="protein sequence ID" value="AAG55866.1"/>
    <property type="molecule type" value="Genomic_DNA"/>
</dbReference>
<dbReference type="EMBL" id="BA000007">
    <property type="protein sequence ID" value="BAB34921.1"/>
    <property type="molecule type" value="Genomic_DNA"/>
</dbReference>
<dbReference type="PIR" id="B99816">
    <property type="entry name" value="B99816"/>
</dbReference>
<dbReference type="PIR" id="F85675">
    <property type="entry name" value="F85675"/>
</dbReference>
<dbReference type="RefSeq" id="NP_309525.1">
    <property type="nucleotide sequence ID" value="NC_002695.1"/>
</dbReference>
<dbReference type="RefSeq" id="WP_000952736.1">
    <property type="nucleotide sequence ID" value="NZ_VOAI01000018.1"/>
</dbReference>
<dbReference type="SMR" id="Q8X8E0"/>
<dbReference type="STRING" id="155864.Z1761"/>
<dbReference type="GeneID" id="913467"/>
<dbReference type="GeneID" id="93776288"/>
<dbReference type="KEGG" id="ece:Z1761"/>
<dbReference type="KEGG" id="ecs:ECs_1498"/>
<dbReference type="PATRIC" id="fig|386585.9.peg.1600"/>
<dbReference type="eggNOG" id="COG0846">
    <property type="taxonomic scope" value="Bacteria"/>
</dbReference>
<dbReference type="HOGENOM" id="CLU_023643_3_1_6"/>
<dbReference type="OMA" id="LIHMHGE"/>
<dbReference type="Proteomes" id="UP000000558">
    <property type="component" value="Chromosome"/>
</dbReference>
<dbReference type="Proteomes" id="UP000002519">
    <property type="component" value="Chromosome"/>
</dbReference>
<dbReference type="GO" id="GO:0005737">
    <property type="term" value="C:cytoplasm"/>
    <property type="evidence" value="ECO:0007669"/>
    <property type="project" value="UniProtKB-SubCell"/>
</dbReference>
<dbReference type="GO" id="GO:0017136">
    <property type="term" value="F:histone deacetylase activity, NAD-dependent"/>
    <property type="evidence" value="ECO:0007669"/>
    <property type="project" value="TreeGrafter"/>
</dbReference>
<dbReference type="GO" id="GO:0070403">
    <property type="term" value="F:NAD+ binding"/>
    <property type="evidence" value="ECO:0007669"/>
    <property type="project" value="UniProtKB-UniRule"/>
</dbReference>
<dbReference type="GO" id="GO:0160013">
    <property type="term" value="F:NAD-dependent protein de-2-hydroxyisobutyrylase activity"/>
    <property type="evidence" value="ECO:0007669"/>
    <property type="project" value="RHEA"/>
</dbReference>
<dbReference type="GO" id="GO:0036054">
    <property type="term" value="F:protein-malonyllysine demalonylase activity"/>
    <property type="evidence" value="ECO:0007669"/>
    <property type="project" value="InterPro"/>
</dbReference>
<dbReference type="GO" id="GO:0036055">
    <property type="term" value="F:protein-succinyllysine desuccinylase activity"/>
    <property type="evidence" value="ECO:0007669"/>
    <property type="project" value="UniProtKB-UniRule"/>
</dbReference>
<dbReference type="GO" id="GO:0008270">
    <property type="term" value="F:zinc ion binding"/>
    <property type="evidence" value="ECO:0007669"/>
    <property type="project" value="UniProtKB-UniRule"/>
</dbReference>
<dbReference type="CDD" id="cd01412">
    <property type="entry name" value="SIRT5_Af1_CobB"/>
    <property type="match status" value="1"/>
</dbReference>
<dbReference type="Gene3D" id="3.30.1600.10">
    <property type="entry name" value="SIR2/SIRT2 'Small Domain"/>
    <property type="match status" value="1"/>
</dbReference>
<dbReference type="Gene3D" id="3.40.50.1220">
    <property type="entry name" value="TPP-binding domain"/>
    <property type="match status" value="1"/>
</dbReference>
<dbReference type="HAMAP" id="MF_01121">
    <property type="entry name" value="Sirtuin_ClassIII"/>
    <property type="match status" value="1"/>
</dbReference>
<dbReference type="InterPro" id="IPR029035">
    <property type="entry name" value="DHS-like_NAD/FAD-binding_dom"/>
</dbReference>
<dbReference type="InterPro" id="IPR050134">
    <property type="entry name" value="NAD-dep_sirtuin_deacylases"/>
</dbReference>
<dbReference type="InterPro" id="IPR003000">
    <property type="entry name" value="Sirtuin"/>
</dbReference>
<dbReference type="InterPro" id="IPR026591">
    <property type="entry name" value="Sirtuin_cat_small_dom_sf"/>
</dbReference>
<dbReference type="InterPro" id="IPR027546">
    <property type="entry name" value="Sirtuin_class_III"/>
</dbReference>
<dbReference type="InterPro" id="IPR026590">
    <property type="entry name" value="Ssirtuin_cat_dom"/>
</dbReference>
<dbReference type="NCBIfam" id="NF001755">
    <property type="entry name" value="PRK00481.1-5"/>
    <property type="match status" value="1"/>
</dbReference>
<dbReference type="PANTHER" id="PTHR11085:SF4">
    <property type="entry name" value="NAD-DEPENDENT PROTEIN DEACYLASE"/>
    <property type="match status" value="1"/>
</dbReference>
<dbReference type="PANTHER" id="PTHR11085">
    <property type="entry name" value="NAD-DEPENDENT PROTEIN DEACYLASE SIRTUIN-5, MITOCHONDRIAL-RELATED"/>
    <property type="match status" value="1"/>
</dbReference>
<dbReference type="Pfam" id="PF02146">
    <property type="entry name" value="SIR2"/>
    <property type="match status" value="1"/>
</dbReference>
<dbReference type="SUPFAM" id="SSF52467">
    <property type="entry name" value="DHS-like NAD/FAD-binding domain"/>
    <property type="match status" value="1"/>
</dbReference>
<dbReference type="PROSITE" id="PS50305">
    <property type="entry name" value="SIRTUIN"/>
    <property type="match status" value="1"/>
</dbReference>
<name>NPD_ECO57</name>
<proteinExistence type="inferred from homology"/>
<reference key="1">
    <citation type="journal article" date="2001" name="Nature">
        <title>Genome sequence of enterohaemorrhagic Escherichia coli O157:H7.</title>
        <authorList>
            <person name="Perna N.T."/>
            <person name="Plunkett G. III"/>
            <person name="Burland V."/>
            <person name="Mau B."/>
            <person name="Glasner J.D."/>
            <person name="Rose D.J."/>
            <person name="Mayhew G.F."/>
            <person name="Evans P.S."/>
            <person name="Gregor J."/>
            <person name="Kirkpatrick H.A."/>
            <person name="Posfai G."/>
            <person name="Hackett J."/>
            <person name="Klink S."/>
            <person name="Boutin A."/>
            <person name="Shao Y."/>
            <person name="Miller L."/>
            <person name="Grotbeck E.J."/>
            <person name="Davis N.W."/>
            <person name="Lim A."/>
            <person name="Dimalanta E.T."/>
            <person name="Potamousis K."/>
            <person name="Apodaca J."/>
            <person name="Anantharaman T.S."/>
            <person name="Lin J."/>
            <person name="Yen G."/>
            <person name="Schwartz D.C."/>
            <person name="Welch R.A."/>
            <person name="Blattner F.R."/>
        </authorList>
    </citation>
    <scope>NUCLEOTIDE SEQUENCE [LARGE SCALE GENOMIC DNA]</scope>
    <source>
        <strain>O157:H7 / EDL933 / ATCC 700927 / EHEC</strain>
    </source>
</reference>
<reference key="2">
    <citation type="journal article" date="2001" name="DNA Res.">
        <title>Complete genome sequence of enterohemorrhagic Escherichia coli O157:H7 and genomic comparison with a laboratory strain K-12.</title>
        <authorList>
            <person name="Hayashi T."/>
            <person name="Makino K."/>
            <person name="Ohnishi M."/>
            <person name="Kurokawa K."/>
            <person name="Ishii K."/>
            <person name="Yokoyama K."/>
            <person name="Han C.-G."/>
            <person name="Ohtsubo E."/>
            <person name="Nakayama K."/>
            <person name="Murata T."/>
            <person name="Tanaka M."/>
            <person name="Tobe T."/>
            <person name="Iida T."/>
            <person name="Takami H."/>
            <person name="Honda T."/>
            <person name="Sasakawa C."/>
            <person name="Ogasawara N."/>
            <person name="Yasunaga T."/>
            <person name="Kuhara S."/>
            <person name="Shiba T."/>
            <person name="Hattori M."/>
            <person name="Shinagawa H."/>
        </authorList>
    </citation>
    <scope>NUCLEOTIDE SEQUENCE [LARGE SCALE GENOMIC DNA]</scope>
    <source>
        <strain>O157:H7 / Sakai / RIMD 0509952 / EHEC</strain>
    </source>
</reference>
<gene>
    <name evidence="2" type="primary">cobB</name>
    <name type="ordered locus">Z1761</name>
    <name type="ordered locus">ECs1498</name>
</gene>
<protein>
    <recommendedName>
        <fullName evidence="2">NAD-dependent protein deacylase</fullName>
        <ecNumber evidence="2">2.3.1.286</ecNumber>
    </recommendedName>
    <alternativeName>
        <fullName evidence="2">Regulatory protein SIR2 homolog</fullName>
    </alternativeName>
</protein>
<keyword id="KW-0877">Alternative promoter usage</keyword>
<keyword id="KW-0963">Cytoplasm</keyword>
<keyword id="KW-0479">Metal-binding</keyword>
<keyword id="KW-0520">NAD</keyword>
<keyword id="KW-1185">Reference proteome</keyword>
<keyword id="KW-0808">Transferase</keyword>
<keyword id="KW-0862">Zinc</keyword>
<accession>Q8X8E0</accession>
<evidence type="ECO:0000250" key="1">
    <source>
        <dbReference type="UniProtKB" id="P0A2F2"/>
    </source>
</evidence>
<evidence type="ECO:0000255" key="2">
    <source>
        <dbReference type="HAMAP-Rule" id="MF_01121"/>
    </source>
</evidence>
<evidence type="ECO:0000255" key="3">
    <source>
        <dbReference type="PROSITE-ProRule" id="PRU00236"/>
    </source>
</evidence>
<feature type="chain" id="PRO_0000110314" description="NAD-dependent protein deacylase">
    <location>
        <begin position="1"/>
        <end position="273"/>
    </location>
</feature>
<feature type="domain" description="Deacetylase sirtuin-type" evidence="3">
    <location>
        <begin position="20"/>
        <end position="272"/>
    </location>
</feature>
<feature type="active site" description="Proton acceptor" evidence="2">
    <location>
        <position position="147"/>
    </location>
</feature>
<feature type="binding site" evidence="2">
    <location>
        <begin position="48"/>
        <end position="67"/>
    </location>
    <ligand>
        <name>NAD(+)</name>
        <dbReference type="ChEBI" id="CHEBI:57540"/>
    </ligand>
</feature>
<feature type="binding site" evidence="2">
    <location>
        <position position="92"/>
    </location>
    <ligand>
        <name>substrate</name>
    </ligand>
</feature>
<feature type="binding site" evidence="2">
    <location>
        <position position="95"/>
    </location>
    <ligand>
        <name>substrate</name>
    </ligand>
</feature>
<feature type="binding site" evidence="2">
    <location>
        <begin position="129"/>
        <end position="132"/>
    </location>
    <ligand>
        <name>NAD(+)</name>
        <dbReference type="ChEBI" id="CHEBI:57540"/>
    </ligand>
</feature>
<feature type="binding site" evidence="2">
    <location>
        <position position="155"/>
    </location>
    <ligand>
        <name>Zn(2+)</name>
        <dbReference type="ChEBI" id="CHEBI:29105"/>
    </ligand>
</feature>
<feature type="binding site" evidence="2">
    <location>
        <position position="174"/>
    </location>
    <ligand>
        <name>Zn(2+)</name>
        <dbReference type="ChEBI" id="CHEBI:29105"/>
    </ligand>
</feature>
<feature type="binding site" evidence="2">
    <location>
        <begin position="214"/>
        <end position="216"/>
    </location>
    <ligand>
        <name>NAD(+)</name>
        <dbReference type="ChEBI" id="CHEBI:57540"/>
    </ligand>
</feature>
<feature type="binding site" evidence="2">
    <location>
        <begin position="240"/>
        <end position="242"/>
    </location>
    <ligand>
        <name>NAD(+)</name>
        <dbReference type="ChEBI" id="CHEBI:57540"/>
    </ligand>
</feature>
<feature type="binding site" evidence="2">
    <location>
        <position position="258"/>
    </location>
    <ligand>
        <name>NAD(+)</name>
        <dbReference type="ChEBI" id="CHEBI:57540"/>
    </ligand>
</feature>
<feature type="splice variant" id="VSP_058459" description="In isoform CobB-Short." evidence="1">
    <location>
        <begin position="1"/>
        <end position="37"/>
    </location>
</feature>
<comment type="function">
    <text evidence="2">NAD-dependent lysine deacetylase that specifically removes acetyl groups on target proteins. Also acts as a protein-lysine deacylase by mediating protein desuccinylation and de-2-hydroxyisobutyrylation. Modulates the activities of several proteins which are inactive in their acylated form.</text>
</comment>
<comment type="catalytic activity">
    <reaction evidence="2">
        <text>N(6)-acetyl-L-lysyl-[protein] + NAD(+) + H2O = 2''-O-acetyl-ADP-D-ribose + nicotinamide + L-lysyl-[protein]</text>
        <dbReference type="Rhea" id="RHEA:43636"/>
        <dbReference type="Rhea" id="RHEA-COMP:9752"/>
        <dbReference type="Rhea" id="RHEA-COMP:10731"/>
        <dbReference type="ChEBI" id="CHEBI:15377"/>
        <dbReference type="ChEBI" id="CHEBI:17154"/>
        <dbReference type="ChEBI" id="CHEBI:29969"/>
        <dbReference type="ChEBI" id="CHEBI:57540"/>
        <dbReference type="ChEBI" id="CHEBI:61930"/>
        <dbReference type="ChEBI" id="CHEBI:83767"/>
        <dbReference type="EC" id="2.3.1.286"/>
    </reaction>
</comment>
<comment type="catalytic activity">
    <reaction evidence="2">
        <text>N(6)-succinyl-L-lysyl-[protein] + NAD(+) + H2O = 2''-O-succinyl-ADP-D-ribose + nicotinamide + L-lysyl-[protein]</text>
        <dbReference type="Rhea" id="RHEA:47668"/>
        <dbReference type="Rhea" id="RHEA-COMP:9752"/>
        <dbReference type="Rhea" id="RHEA-COMP:11877"/>
        <dbReference type="ChEBI" id="CHEBI:15377"/>
        <dbReference type="ChEBI" id="CHEBI:17154"/>
        <dbReference type="ChEBI" id="CHEBI:29969"/>
        <dbReference type="ChEBI" id="CHEBI:57540"/>
        <dbReference type="ChEBI" id="CHEBI:87830"/>
        <dbReference type="ChEBI" id="CHEBI:87832"/>
    </reaction>
</comment>
<comment type="catalytic activity">
    <reaction evidence="2">
        <text>N(6)-(2-hydroxyisobutanoyl)-L-lysyl-[protein] + NAD(+) + H2O = 2''-O-(2-hydroxyisobutanoyl)-ADP-D-ribose + nicotinamide + L-lysyl-[protein]</text>
        <dbReference type="Rhea" id="RHEA:24364"/>
        <dbReference type="Rhea" id="RHEA-COMP:9752"/>
        <dbReference type="Rhea" id="RHEA-COMP:15921"/>
        <dbReference type="ChEBI" id="CHEBI:15377"/>
        <dbReference type="ChEBI" id="CHEBI:17154"/>
        <dbReference type="ChEBI" id="CHEBI:29969"/>
        <dbReference type="ChEBI" id="CHEBI:57540"/>
        <dbReference type="ChEBI" id="CHEBI:144968"/>
        <dbReference type="ChEBI" id="CHEBI:144969"/>
    </reaction>
</comment>
<comment type="cofactor">
    <cofactor evidence="2">
        <name>Zn(2+)</name>
        <dbReference type="ChEBI" id="CHEBI:29105"/>
    </cofactor>
    <text evidence="2">Binds 1 zinc ion per subunit.</text>
</comment>
<comment type="subcellular location">
    <subcellularLocation>
        <location evidence="2">Cytoplasm</location>
    </subcellularLocation>
</comment>
<comment type="alternative products">
    <event type="alternative promoter"/>
    <isoform>
        <id>Q8X8E0-1</id>
        <name evidence="1">CobB-Long</name>
        <sequence type="displayed"/>
    </isoform>
    <isoform>
        <id>Q8X8E0-2</id>
        <name evidence="1">CobB-Short</name>
        <sequence type="described" ref="VSP_058459"/>
    </isoform>
</comment>
<comment type="domain">
    <text evidence="2">2 residues (Tyr-92 and Arg-95) present in a large hydrophobic pocket are probably involved in substrate specificity. They are important for desuccinylation activity, but dispensable for deacetylation activity.</text>
</comment>
<comment type="similarity">
    <text evidence="2">Belongs to the sirtuin family. Class III subfamily.</text>
</comment>
<sequence length="273" mass="30936">MLSRRGHRLSRFRKNKRRLRERLRQRIFFRDKVVPEAMEKPRVLVLTGAGISAESGIRTFRAADGLWEEHRVEDVATPEGFDRDPELVQAFYNARRRQLQQPEIQPNAAHLALAKLQDALGDRFLLVTQNIDNLHERAGNTNVIHMHGELLKVRCSQSGQVLDWTGDVTPEDKCHCCQFPAPLRPHVVWFGEMPLGMDEIYMALSMADIFIAIGTSGHVYPAAGFVHEAKLHGAHTVELNLEPSQVGNEFAEKYYGPASQVVPEFVEKLLKGL</sequence>
<organism>
    <name type="scientific">Escherichia coli O157:H7</name>
    <dbReference type="NCBI Taxonomy" id="83334"/>
    <lineage>
        <taxon>Bacteria</taxon>
        <taxon>Pseudomonadati</taxon>
        <taxon>Pseudomonadota</taxon>
        <taxon>Gammaproteobacteria</taxon>
        <taxon>Enterobacterales</taxon>
        <taxon>Enterobacteriaceae</taxon>
        <taxon>Escherichia</taxon>
    </lineage>
</organism>